<feature type="chain" id="PRO_0000129159" description="Small ribosomal subunit protein mS37">
    <location>
        <begin position="1"/>
        <end position="118"/>
    </location>
</feature>
<feature type="domain" description="CHCH" evidence="3">
    <location>
        <begin position="42"/>
        <end position="84"/>
    </location>
</feature>
<feature type="region of interest" description="Disordered" evidence="4">
    <location>
        <begin position="86"/>
        <end position="105"/>
    </location>
</feature>
<feature type="short sequence motif" description="Cx9C motif 1" evidence="3">
    <location>
        <begin position="45"/>
        <end position="55"/>
    </location>
</feature>
<feature type="short sequence motif" description="Cx9C motif 2" evidence="3">
    <location>
        <begin position="66"/>
        <end position="76"/>
    </location>
</feature>
<feature type="compositionally biased region" description="Polar residues" evidence="4">
    <location>
        <begin position="89"/>
        <end position="99"/>
    </location>
</feature>
<feature type="disulfide bond" evidence="3">
    <location>
        <begin position="45"/>
        <end position="76"/>
    </location>
</feature>
<feature type="disulfide bond" evidence="3">
    <location>
        <begin position="55"/>
        <end position="66"/>
    </location>
</feature>
<reference key="1">
    <citation type="journal article" date="2005" name="Science">
        <title>The transcriptional landscape of the mammalian genome.</title>
        <authorList>
            <person name="Carninci P."/>
            <person name="Kasukawa T."/>
            <person name="Katayama S."/>
            <person name="Gough J."/>
            <person name="Frith M.C."/>
            <person name="Maeda N."/>
            <person name="Oyama R."/>
            <person name="Ravasi T."/>
            <person name="Lenhard B."/>
            <person name="Wells C."/>
            <person name="Kodzius R."/>
            <person name="Shimokawa K."/>
            <person name="Bajic V.B."/>
            <person name="Brenner S.E."/>
            <person name="Batalov S."/>
            <person name="Forrest A.R."/>
            <person name="Zavolan M."/>
            <person name="Davis M.J."/>
            <person name="Wilming L.G."/>
            <person name="Aidinis V."/>
            <person name="Allen J.E."/>
            <person name="Ambesi-Impiombato A."/>
            <person name="Apweiler R."/>
            <person name="Aturaliya R.N."/>
            <person name="Bailey T.L."/>
            <person name="Bansal M."/>
            <person name="Baxter L."/>
            <person name="Beisel K.W."/>
            <person name="Bersano T."/>
            <person name="Bono H."/>
            <person name="Chalk A.M."/>
            <person name="Chiu K.P."/>
            <person name="Choudhary V."/>
            <person name="Christoffels A."/>
            <person name="Clutterbuck D.R."/>
            <person name="Crowe M.L."/>
            <person name="Dalla E."/>
            <person name="Dalrymple B.P."/>
            <person name="de Bono B."/>
            <person name="Della Gatta G."/>
            <person name="di Bernardo D."/>
            <person name="Down T."/>
            <person name="Engstrom P."/>
            <person name="Fagiolini M."/>
            <person name="Faulkner G."/>
            <person name="Fletcher C.F."/>
            <person name="Fukushima T."/>
            <person name="Furuno M."/>
            <person name="Futaki S."/>
            <person name="Gariboldi M."/>
            <person name="Georgii-Hemming P."/>
            <person name="Gingeras T.R."/>
            <person name="Gojobori T."/>
            <person name="Green R.E."/>
            <person name="Gustincich S."/>
            <person name="Harbers M."/>
            <person name="Hayashi Y."/>
            <person name="Hensch T.K."/>
            <person name="Hirokawa N."/>
            <person name="Hill D."/>
            <person name="Huminiecki L."/>
            <person name="Iacono M."/>
            <person name="Ikeo K."/>
            <person name="Iwama A."/>
            <person name="Ishikawa T."/>
            <person name="Jakt M."/>
            <person name="Kanapin A."/>
            <person name="Katoh M."/>
            <person name="Kawasawa Y."/>
            <person name="Kelso J."/>
            <person name="Kitamura H."/>
            <person name="Kitano H."/>
            <person name="Kollias G."/>
            <person name="Krishnan S.P."/>
            <person name="Kruger A."/>
            <person name="Kummerfeld S.K."/>
            <person name="Kurochkin I.V."/>
            <person name="Lareau L.F."/>
            <person name="Lazarevic D."/>
            <person name="Lipovich L."/>
            <person name="Liu J."/>
            <person name="Liuni S."/>
            <person name="McWilliam S."/>
            <person name="Madan Babu M."/>
            <person name="Madera M."/>
            <person name="Marchionni L."/>
            <person name="Matsuda H."/>
            <person name="Matsuzawa S."/>
            <person name="Miki H."/>
            <person name="Mignone F."/>
            <person name="Miyake S."/>
            <person name="Morris K."/>
            <person name="Mottagui-Tabar S."/>
            <person name="Mulder N."/>
            <person name="Nakano N."/>
            <person name="Nakauchi H."/>
            <person name="Ng P."/>
            <person name="Nilsson R."/>
            <person name="Nishiguchi S."/>
            <person name="Nishikawa S."/>
            <person name="Nori F."/>
            <person name="Ohara O."/>
            <person name="Okazaki Y."/>
            <person name="Orlando V."/>
            <person name="Pang K.C."/>
            <person name="Pavan W.J."/>
            <person name="Pavesi G."/>
            <person name="Pesole G."/>
            <person name="Petrovsky N."/>
            <person name="Piazza S."/>
            <person name="Reed J."/>
            <person name="Reid J.F."/>
            <person name="Ring B.Z."/>
            <person name="Ringwald M."/>
            <person name="Rost B."/>
            <person name="Ruan Y."/>
            <person name="Salzberg S.L."/>
            <person name="Sandelin A."/>
            <person name="Schneider C."/>
            <person name="Schoenbach C."/>
            <person name="Sekiguchi K."/>
            <person name="Semple C.A."/>
            <person name="Seno S."/>
            <person name="Sessa L."/>
            <person name="Sheng Y."/>
            <person name="Shibata Y."/>
            <person name="Shimada H."/>
            <person name="Shimada K."/>
            <person name="Silva D."/>
            <person name="Sinclair B."/>
            <person name="Sperling S."/>
            <person name="Stupka E."/>
            <person name="Sugiura K."/>
            <person name="Sultana R."/>
            <person name="Takenaka Y."/>
            <person name="Taki K."/>
            <person name="Tammoja K."/>
            <person name="Tan S.L."/>
            <person name="Tang S."/>
            <person name="Taylor M.S."/>
            <person name="Tegner J."/>
            <person name="Teichmann S.A."/>
            <person name="Ueda H.R."/>
            <person name="van Nimwegen E."/>
            <person name="Verardo R."/>
            <person name="Wei C.L."/>
            <person name="Yagi K."/>
            <person name="Yamanishi H."/>
            <person name="Zabarovsky E."/>
            <person name="Zhu S."/>
            <person name="Zimmer A."/>
            <person name="Hide W."/>
            <person name="Bult C."/>
            <person name="Grimmond S.M."/>
            <person name="Teasdale R.D."/>
            <person name="Liu E.T."/>
            <person name="Brusic V."/>
            <person name="Quackenbush J."/>
            <person name="Wahlestedt C."/>
            <person name="Mattick J.S."/>
            <person name="Hume D.A."/>
            <person name="Kai C."/>
            <person name="Sasaki D."/>
            <person name="Tomaru Y."/>
            <person name="Fukuda S."/>
            <person name="Kanamori-Katayama M."/>
            <person name="Suzuki M."/>
            <person name="Aoki J."/>
            <person name="Arakawa T."/>
            <person name="Iida J."/>
            <person name="Imamura K."/>
            <person name="Itoh M."/>
            <person name="Kato T."/>
            <person name="Kawaji H."/>
            <person name="Kawagashira N."/>
            <person name="Kawashima T."/>
            <person name="Kojima M."/>
            <person name="Kondo S."/>
            <person name="Konno H."/>
            <person name="Nakano K."/>
            <person name="Ninomiya N."/>
            <person name="Nishio T."/>
            <person name="Okada M."/>
            <person name="Plessy C."/>
            <person name="Shibata K."/>
            <person name="Shiraki T."/>
            <person name="Suzuki S."/>
            <person name="Tagami M."/>
            <person name="Waki K."/>
            <person name="Watahiki A."/>
            <person name="Okamura-Oho Y."/>
            <person name="Suzuki H."/>
            <person name="Kawai J."/>
            <person name="Hayashizaki Y."/>
        </authorList>
    </citation>
    <scope>NUCLEOTIDE SEQUENCE [LARGE SCALE MRNA]</scope>
    <source>
        <strain>C57BL/6J</strain>
    </source>
</reference>
<reference key="2">
    <citation type="journal article" date="2004" name="Genome Res.">
        <title>The status, quality, and expansion of the NIH full-length cDNA project: the Mammalian Gene Collection (MGC).</title>
        <authorList>
            <consortium name="The MGC Project Team"/>
        </authorList>
    </citation>
    <scope>NUCLEOTIDE SEQUENCE [LARGE SCALE MRNA]</scope>
    <source>
        <strain>C57BL/6J</strain>
        <tissue>Brain</tissue>
        <tissue>Eye</tissue>
    </source>
</reference>
<reference key="3">
    <citation type="journal article" date="2010" name="Cell">
        <title>A tissue-specific atlas of mouse protein phosphorylation and expression.</title>
        <authorList>
            <person name="Huttlin E.L."/>
            <person name="Jedrychowski M.P."/>
            <person name="Elias J.E."/>
            <person name="Goswami T."/>
            <person name="Rad R."/>
            <person name="Beausoleil S.A."/>
            <person name="Villen J."/>
            <person name="Haas W."/>
            <person name="Sowa M.E."/>
            <person name="Gygi S.P."/>
        </authorList>
    </citation>
    <scope>IDENTIFICATION BY MASS SPECTROMETRY [LARGE SCALE ANALYSIS]</scope>
    <source>
        <tissue>Brain</tissue>
        <tissue>Brown adipose tissue</tissue>
        <tissue>Heart</tissue>
        <tissue>Kidney</tissue>
        <tissue>Liver</tissue>
        <tissue>Pancreas</tissue>
    </source>
</reference>
<sequence length="118" mass="13608">MATPSLRGRLARFANPGKPILKPNKPLILANRVGNRRREKGEATCITEMSMMMACWKQNEFRDEACRKEIQDFFDCSSRAQEARKMRSIQESLGQSESLSPHKMTKLLQRFPNKSHLI</sequence>
<accession>Q9CQA6</accession>
<accession>Q56A12</accession>
<evidence type="ECO:0000250" key="1"/>
<evidence type="ECO:0000250" key="2">
    <source>
        <dbReference type="UniProtKB" id="Q96BP2"/>
    </source>
</evidence>
<evidence type="ECO:0000255" key="3">
    <source>
        <dbReference type="PROSITE-ProRule" id="PRU01150"/>
    </source>
</evidence>
<evidence type="ECO:0000256" key="4">
    <source>
        <dbReference type="SAM" id="MobiDB-lite"/>
    </source>
</evidence>
<evidence type="ECO:0000305" key="5"/>
<protein>
    <recommendedName>
        <fullName evidence="5">Small ribosomal subunit protein mS37</fullName>
    </recommendedName>
    <alternativeName>
        <fullName>28S ribosomal protein S37, mitochondrial</fullName>
        <shortName>MRP-S37</shortName>
    </alternativeName>
    <alternativeName>
        <fullName>Coiled-coil-helix-coiled-coil-helix domain-containing protein 1</fullName>
    </alternativeName>
</protein>
<organism>
    <name type="scientific">Mus musculus</name>
    <name type="common">Mouse</name>
    <dbReference type="NCBI Taxonomy" id="10090"/>
    <lineage>
        <taxon>Eukaryota</taxon>
        <taxon>Metazoa</taxon>
        <taxon>Chordata</taxon>
        <taxon>Craniata</taxon>
        <taxon>Vertebrata</taxon>
        <taxon>Euteleostomi</taxon>
        <taxon>Mammalia</taxon>
        <taxon>Eutheria</taxon>
        <taxon>Euarchontoglires</taxon>
        <taxon>Glires</taxon>
        <taxon>Rodentia</taxon>
        <taxon>Myomorpha</taxon>
        <taxon>Muroidea</taxon>
        <taxon>Muridae</taxon>
        <taxon>Murinae</taxon>
        <taxon>Mus</taxon>
        <taxon>Mus</taxon>
    </lineage>
</organism>
<keyword id="KW-0002">3D-structure</keyword>
<keyword id="KW-1015">Disulfide bond</keyword>
<keyword id="KW-0496">Mitochondrion</keyword>
<keyword id="KW-0539">Nucleus</keyword>
<keyword id="KW-1185">Reference proteome</keyword>
<keyword id="KW-0687">Ribonucleoprotein</keyword>
<keyword id="KW-0689">Ribosomal protein</keyword>
<dbReference type="EMBL" id="AK003263">
    <property type="protein sequence ID" value="BAB22679.1"/>
    <property type="molecule type" value="mRNA"/>
</dbReference>
<dbReference type="EMBL" id="AK011261">
    <property type="protein sequence ID" value="BAB27502.1"/>
    <property type="molecule type" value="mRNA"/>
</dbReference>
<dbReference type="EMBL" id="BC052720">
    <property type="protein sequence ID" value="AAH52720.1"/>
    <property type="molecule type" value="mRNA"/>
</dbReference>
<dbReference type="EMBL" id="BC092216">
    <property type="protein sequence ID" value="AAH92216.1"/>
    <property type="molecule type" value="mRNA"/>
</dbReference>
<dbReference type="CCDS" id="CCDS26852.1"/>
<dbReference type="RefSeq" id="NP_079642.1">
    <property type="nucleotide sequence ID" value="NM_025366.3"/>
</dbReference>
<dbReference type="PDB" id="7PNW">
    <property type="method" value="EM"/>
    <property type="resolution" value="3.09 A"/>
    <property type="chains" value="2=2-118"/>
</dbReference>
<dbReference type="PDBsum" id="7PNW"/>
<dbReference type="EMDB" id="EMD-13554"/>
<dbReference type="SMR" id="Q9CQA6"/>
<dbReference type="BioGRID" id="211230">
    <property type="interactions" value="2"/>
</dbReference>
<dbReference type="ComplexPortal" id="CPX-5301">
    <property type="entry name" value="28S mitochondrial small ribosomal subunit"/>
</dbReference>
<dbReference type="FunCoup" id="Q9CQA6">
    <property type="interactions" value="2277"/>
</dbReference>
<dbReference type="STRING" id="10090.ENSMUSP00000071202"/>
<dbReference type="GlyGen" id="Q9CQA6">
    <property type="glycosylation" value="1 site"/>
</dbReference>
<dbReference type="iPTMnet" id="Q9CQA6"/>
<dbReference type="PhosphoSitePlus" id="Q9CQA6"/>
<dbReference type="PaxDb" id="10090-ENSMUSP00000071202"/>
<dbReference type="ProteomicsDB" id="281207"/>
<dbReference type="Pumba" id="Q9CQA6"/>
<dbReference type="Antibodypedia" id="45414">
    <property type="antibodies" value="74 antibodies from 23 providers"/>
</dbReference>
<dbReference type="DNASU" id="66121"/>
<dbReference type="Ensembl" id="ENSMUST00000071215.5">
    <property type="protein sequence ID" value="ENSMUSP00000071202.4"/>
    <property type="gene ID" value="ENSMUSG00000063787.5"/>
</dbReference>
<dbReference type="GeneID" id="66121"/>
<dbReference type="KEGG" id="mmu:66121"/>
<dbReference type="UCSC" id="uc007skm.2">
    <property type="organism name" value="mouse"/>
</dbReference>
<dbReference type="AGR" id="MGI:1913371"/>
<dbReference type="CTD" id="118487"/>
<dbReference type="MGI" id="MGI:1913371">
    <property type="gene designation" value="Chchd1"/>
</dbReference>
<dbReference type="VEuPathDB" id="HostDB:ENSMUSG00000063787"/>
<dbReference type="eggNOG" id="KOG4695">
    <property type="taxonomic scope" value="Eukaryota"/>
</dbReference>
<dbReference type="GeneTree" id="ENSGT00390000007683"/>
<dbReference type="HOGENOM" id="CLU_146244_1_0_1"/>
<dbReference type="InParanoid" id="Q9CQA6"/>
<dbReference type="OMA" id="CVTEMSM"/>
<dbReference type="OrthoDB" id="5825849at2759"/>
<dbReference type="PhylomeDB" id="Q9CQA6"/>
<dbReference type="TreeFam" id="TF314650"/>
<dbReference type="Reactome" id="R-MMU-5389840">
    <property type="pathway name" value="Mitochondrial translation elongation"/>
</dbReference>
<dbReference type="Reactome" id="R-MMU-5419276">
    <property type="pathway name" value="Mitochondrial translation termination"/>
</dbReference>
<dbReference type="BioGRID-ORCS" id="66121">
    <property type="hits" value="13 hits in 75 CRISPR screens"/>
</dbReference>
<dbReference type="ChiTaRS" id="Chchd1">
    <property type="organism name" value="mouse"/>
</dbReference>
<dbReference type="PRO" id="PR:Q9CQA6"/>
<dbReference type="Proteomes" id="UP000000589">
    <property type="component" value="Chromosome 14"/>
</dbReference>
<dbReference type="RNAct" id="Q9CQA6">
    <property type="molecule type" value="protein"/>
</dbReference>
<dbReference type="Bgee" id="ENSMUSG00000063787">
    <property type="expression patterns" value="Expressed in quadriceps femoris and 64 other cell types or tissues"/>
</dbReference>
<dbReference type="ExpressionAtlas" id="Q9CQA6">
    <property type="expression patterns" value="baseline and differential"/>
</dbReference>
<dbReference type="GO" id="GO:0005829">
    <property type="term" value="C:cytosol"/>
    <property type="evidence" value="ECO:0007669"/>
    <property type="project" value="Ensembl"/>
</dbReference>
<dbReference type="GO" id="GO:0001650">
    <property type="term" value="C:fibrillar center"/>
    <property type="evidence" value="ECO:0007669"/>
    <property type="project" value="Ensembl"/>
</dbReference>
<dbReference type="GO" id="GO:0005743">
    <property type="term" value="C:mitochondrial inner membrane"/>
    <property type="evidence" value="ECO:0000303"/>
    <property type="project" value="ComplexPortal"/>
</dbReference>
<dbReference type="GO" id="GO:0005763">
    <property type="term" value="C:mitochondrial small ribosomal subunit"/>
    <property type="evidence" value="ECO:0000303"/>
    <property type="project" value="ComplexPortal"/>
</dbReference>
<dbReference type="GO" id="GO:0005739">
    <property type="term" value="C:mitochondrion"/>
    <property type="evidence" value="ECO:0007005"/>
    <property type="project" value="MGI"/>
</dbReference>
<dbReference type="GO" id="GO:0005654">
    <property type="term" value="C:nucleoplasm"/>
    <property type="evidence" value="ECO:0007669"/>
    <property type="project" value="Ensembl"/>
</dbReference>
<dbReference type="GO" id="GO:0032543">
    <property type="term" value="P:mitochondrial translation"/>
    <property type="evidence" value="ECO:0000303"/>
    <property type="project" value="ComplexPortal"/>
</dbReference>
<dbReference type="InterPro" id="IPR010625">
    <property type="entry name" value="CHCH"/>
</dbReference>
<dbReference type="InterPro" id="IPR009069">
    <property type="entry name" value="Cys_alpha_HP_mot_SF"/>
</dbReference>
<dbReference type="InterPro" id="IPR033620">
    <property type="entry name" value="Ribosomal_mS37_met"/>
</dbReference>
<dbReference type="PANTHER" id="PTHR31278">
    <property type="entry name" value="CHCHD1"/>
    <property type="match status" value="1"/>
</dbReference>
<dbReference type="PANTHER" id="PTHR31278:SF2">
    <property type="entry name" value="SMALL RIBOSOMAL SUBUNIT PROTEIN MS37"/>
    <property type="match status" value="1"/>
</dbReference>
<dbReference type="Pfam" id="PF06747">
    <property type="entry name" value="CHCH"/>
    <property type="match status" value="1"/>
</dbReference>
<dbReference type="SUPFAM" id="SSF47072">
    <property type="entry name" value="Cysteine alpha-hairpin motif"/>
    <property type="match status" value="1"/>
</dbReference>
<dbReference type="PROSITE" id="PS51808">
    <property type="entry name" value="CHCH"/>
    <property type="match status" value="1"/>
</dbReference>
<comment type="subunit">
    <text evidence="1">Component of the mitochondrial ribosome small subunit (28S) which comprises a 12S rRNA and about 30 distinct proteins.</text>
</comment>
<comment type="subcellular location">
    <subcellularLocation>
        <location evidence="2">Mitochondrion</location>
    </subcellularLocation>
    <subcellularLocation>
        <location evidence="2">Nucleus</location>
    </subcellularLocation>
</comment>
<comment type="similarity">
    <text evidence="5">Belongs to the mitochondrion-specific ribosomal protein mS37 family.</text>
</comment>
<name>CHCH1_MOUSE</name>
<proteinExistence type="evidence at protein level"/>
<gene>
    <name type="primary">Chchd1</name>
    <name type="synonym">Mrps37</name>
</gene>